<evidence type="ECO:0000250" key="1"/>
<evidence type="ECO:0000256" key="2">
    <source>
        <dbReference type="SAM" id="MobiDB-lite"/>
    </source>
</evidence>
<evidence type="ECO:0000305" key="3"/>
<dbReference type="EC" id="3.5.4.16"/>
<dbReference type="EMBL" id="Z72509">
    <property type="protein sequence ID" value="CAA96650.1"/>
    <property type="molecule type" value="Genomic_DNA"/>
</dbReference>
<dbReference type="PIR" id="T21669">
    <property type="entry name" value="T21669"/>
</dbReference>
<dbReference type="RefSeq" id="NP_505710.1">
    <property type="nucleotide sequence ID" value="NM_073309.6"/>
</dbReference>
<dbReference type="SMR" id="Q19980"/>
<dbReference type="BioGRID" id="44501">
    <property type="interactions" value="12"/>
</dbReference>
<dbReference type="DIP" id="DIP-24416N"/>
<dbReference type="FunCoup" id="Q19980">
    <property type="interactions" value="813"/>
</dbReference>
<dbReference type="IntAct" id="Q19980">
    <property type="interactions" value="10"/>
</dbReference>
<dbReference type="STRING" id="6239.F32G8.6.1"/>
<dbReference type="PaxDb" id="6239-F32G8.6"/>
<dbReference type="PeptideAtlas" id="Q19980"/>
<dbReference type="EnsemblMetazoa" id="F32G8.6.1">
    <property type="protein sequence ID" value="F32G8.6.1"/>
    <property type="gene ID" value="WBGene00000298"/>
</dbReference>
<dbReference type="GeneID" id="179472"/>
<dbReference type="KEGG" id="cel:CELE_F32G8.6"/>
<dbReference type="UCSC" id="F32G8.6">
    <property type="organism name" value="c. elegans"/>
</dbReference>
<dbReference type="AGR" id="WB:WBGene00000298"/>
<dbReference type="CTD" id="179472"/>
<dbReference type="WormBase" id="F32G8.6">
    <property type="protein sequence ID" value="CE05795"/>
    <property type="gene ID" value="WBGene00000298"/>
    <property type="gene designation" value="cat-4"/>
</dbReference>
<dbReference type="eggNOG" id="KOG2698">
    <property type="taxonomic scope" value="Eukaryota"/>
</dbReference>
<dbReference type="GeneTree" id="ENSGT00390000013481"/>
<dbReference type="HOGENOM" id="CLU_049768_2_0_1"/>
<dbReference type="InParanoid" id="Q19980"/>
<dbReference type="OMA" id="HFACRPQ"/>
<dbReference type="OrthoDB" id="4966at2759"/>
<dbReference type="PhylomeDB" id="Q19980"/>
<dbReference type="Reactome" id="R-CEL-1474151">
    <property type="pathway name" value="Tetrahydrobiopterin (BH4) synthesis, recycling, salvage and regulation"/>
</dbReference>
<dbReference type="UniPathway" id="UPA00848">
    <property type="reaction ID" value="UER00151"/>
</dbReference>
<dbReference type="PRO" id="PR:Q19980"/>
<dbReference type="Proteomes" id="UP000001940">
    <property type="component" value="Chromosome V"/>
</dbReference>
<dbReference type="Bgee" id="WBGene00000298">
    <property type="expression patterns" value="Expressed in larva and 3 other cell types or tissues"/>
</dbReference>
<dbReference type="GO" id="GO:0005737">
    <property type="term" value="C:cytoplasm"/>
    <property type="evidence" value="ECO:0000318"/>
    <property type="project" value="GO_Central"/>
</dbReference>
<dbReference type="GO" id="GO:0005525">
    <property type="term" value="F:GTP binding"/>
    <property type="evidence" value="ECO:0000318"/>
    <property type="project" value="GO_Central"/>
</dbReference>
<dbReference type="GO" id="GO:0003934">
    <property type="term" value="F:GTP cyclohydrolase I activity"/>
    <property type="evidence" value="ECO:0000315"/>
    <property type="project" value="WormBase"/>
</dbReference>
<dbReference type="GO" id="GO:0008270">
    <property type="term" value="F:zinc ion binding"/>
    <property type="evidence" value="ECO:0000318"/>
    <property type="project" value="GO_Central"/>
</dbReference>
<dbReference type="GO" id="GO:0006585">
    <property type="term" value="P:dopamine biosynthetic process from tyrosine"/>
    <property type="evidence" value="ECO:0000315"/>
    <property type="project" value="WormBase"/>
</dbReference>
<dbReference type="GO" id="GO:0042438">
    <property type="term" value="P:melanin biosynthetic process"/>
    <property type="evidence" value="ECO:0000315"/>
    <property type="project" value="WormBase"/>
</dbReference>
<dbReference type="GO" id="GO:0006729">
    <property type="term" value="P:tetrahydrobiopterin biosynthetic process"/>
    <property type="evidence" value="ECO:0000315"/>
    <property type="project" value="WormBase"/>
</dbReference>
<dbReference type="GO" id="GO:0046654">
    <property type="term" value="P:tetrahydrofolate biosynthetic process"/>
    <property type="evidence" value="ECO:0007669"/>
    <property type="project" value="InterPro"/>
</dbReference>
<dbReference type="CDD" id="cd00642">
    <property type="entry name" value="GTP_cyclohydro1"/>
    <property type="match status" value="1"/>
</dbReference>
<dbReference type="FunFam" id="1.10.286.10:FF:000003">
    <property type="entry name" value="GTP cyclohydrolase 1"/>
    <property type="match status" value="1"/>
</dbReference>
<dbReference type="FunFam" id="3.30.1130.10:FF:000012">
    <property type="entry name" value="GTP cyclohydrolase 1"/>
    <property type="match status" value="1"/>
</dbReference>
<dbReference type="Gene3D" id="1.10.286.10">
    <property type="match status" value="1"/>
</dbReference>
<dbReference type="Gene3D" id="3.30.1130.10">
    <property type="match status" value="1"/>
</dbReference>
<dbReference type="HAMAP" id="MF_00223">
    <property type="entry name" value="FolE"/>
    <property type="match status" value="1"/>
</dbReference>
<dbReference type="InterPro" id="IPR043133">
    <property type="entry name" value="GTP-CH-I_C/QueF"/>
</dbReference>
<dbReference type="InterPro" id="IPR043134">
    <property type="entry name" value="GTP-CH-I_N"/>
</dbReference>
<dbReference type="InterPro" id="IPR001474">
    <property type="entry name" value="GTP_CycHdrlase_I"/>
</dbReference>
<dbReference type="InterPro" id="IPR018234">
    <property type="entry name" value="GTP_CycHdrlase_I_CS"/>
</dbReference>
<dbReference type="InterPro" id="IPR020602">
    <property type="entry name" value="GTP_CycHdrlase_I_dom"/>
</dbReference>
<dbReference type="NCBIfam" id="TIGR00063">
    <property type="entry name" value="folE"/>
    <property type="match status" value="1"/>
</dbReference>
<dbReference type="NCBIfam" id="NF006825">
    <property type="entry name" value="PRK09347.1-2"/>
    <property type="match status" value="1"/>
</dbReference>
<dbReference type="NCBIfam" id="NF006826">
    <property type="entry name" value="PRK09347.1-3"/>
    <property type="match status" value="1"/>
</dbReference>
<dbReference type="PANTHER" id="PTHR11109:SF7">
    <property type="entry name" value="GTP CYCLOHYDROLASE 1"/>
    <property type="match status" value="1"/>
</dbReference>
<dbReference type="PANTHER" id="PTHR11109">
    <property type="entry name" value="GTP CYCLOHYDROLASE I"/>
    <property type="match status" value="1"/>
</dbReference>
<dbReference type="Pfam" id="PF01227">
    <property type="entry name" value="GTP_cyclohydroI"/>
    <property type="match status" value="1"/>
</dbReference>
<dbReference type="SUPFAM" id="SSF55620">
    <property type="entry name" value="Tetrahydrobiopterin biosynthesis enzymes-like"/>
    <property type="match status" value="1"/>
</dbReference>
<dbReference type="PROSITE" id="PS00859">
    <property type="entry name" value="GTP_CYCLOHYDROL_1_1"/>
    <property type="match status" value="1"/>
</dbReference>
<dbReference type="PROSITE" id="PS00860">
    <property type="entry name" value="GTP_CYCLOHYDROL_1_2"/>
    <property type="match status" value="1"/>
</dbReference>
<reference key="1">
    <citation type="journal article" date="1998" name="Science">
        <title>Genome sequence of the nematode C. elegans: a platform for investigating biology.</title>
        <authorList>
            <consortium name="The C. elegans sequencing consortium"/>
        </authorList>
    </citation>
    <scope>NUCLEOTIDE SEQUENCE [LARGE SCALE GENOMIC DNA]</scope>
    <source>
        <strain>Bristol N2</strain>
    </source>
</reference>
<protein>
    <recommendedName>
        <fullName>GTP cyclohydrolase 1</fullName>
        <ecNumber>3.5.4.16</ecNumber>
    </recommendedName>
    <alternativeName>
        <fullName>GTP cyclohydrolase I</fullName>
        <shortName>GTP-CH-I</shortName>
    </alternativeName>
</protein>
<gene>
    <name type="primary">cat-4</name>
    <name type="ORF">F32G8.6</name>
</gene>
<name>GCH1_CAEEL</name>
<keyword id="KW-0021">Allosteric enzyme</keyword>
<keyword id="KW-0342">GTP-binding</keyword>
<keyword id="KW-0378">Hydrolase</keyword>
<keyword id="KW-0479">Metal-binding</keyword>
<keyword id="KW-0547">Nucleotide-binding</keyword>
<keyword id="KW-1185">Reference proteome</keyword>
<keyword id="KW-0783">Tetrahydrobiopterin biosynthesis</keyword>
<keyword id="KW-0862">Zinc</keyword>
<organism>
    <name type="scientific">Caenorhabditis elegans</name>
    <dbReference type="NCBI Taxonomy" id="6239"/>
    <lineage>
        <taxon>Eukaryota</taxon>
        <taxon>Metazoa</taxon>
        <taxon>Ecdysozoa</taxon>
        <taxon>Nematoda</taxon>
        <taxon>Chromadorea</taxon>
        <taxon>Rhabditida</taxon>
        <taxon>Rhabditina</taxon>
        <taxon>Rhabditomorpha</taxon>
        <taxon>Rhabditoidea</taxon>
        <taxon>Rhabditidae</taxon>
        <taxon>Peloderinae</taxon>
        <taxon>Caenorhabditis</taxon>
    </lineage>
</organism>
<feature type="chain" id="PRO_0000119480" description="GTP cyclohydrolase 1">
    <location>
        <begin position="1"/>
        <end position="223"/>
    </location>
</feature>
<feature type="region of interest" description="Disordered" evidence="2">
    <location>
        <begin position="1"/>
        <end position="28"/>
    </location>
</feature>
<feature type="binding site" evidence="1">
    <location>
        <position position="113"/>
    </location>
    <ligand>
        <name>Zn(2+)</name>
        <dbReference type="ChEBI" id="CHEBI:29105"/>
    </ligand>
</feature>
<feature type="binding site" evidence="1">
    <location>
        <position position="116"/>
    </location>
    <ligand>
        <name>Zn(2+)</name>
        <dbReference type="ChEBI" id="CHEBI:29105"/>
    </ligand>
</feature>
<feature type="binding site" evidence="1">
    <location>
        <position position="184"/>
    </location>
    <ligand>
        <name>Zn(2+)</name>
        <dbReference type="ChEBI" id="CHEBI:29105"/>
    </ligand>
</feature>
<accession>Q19980</accession>
<proteinExistence type="evidence at protein level"/>
<comment type="function">
    <text>Involved in serotonin and dopamine biosynthesis that affects movement, mating behavior, foraging behavior, and cell migration.</text>
</comment>
<comment type="catalytic activity">
    <reaction>
        <text>GTP + H2O = 7,8-dihydroneopterin 3'-triphosphate + formate + H(+)</text>
        <dbReference type="Rhea" id="RHEA:17473"/>
        <dbReference type="ChEBI" id="CHEBI:15377"/>
        <dbReference type="ChEBI" id="CHEBI:15378"/>
        <dbReference type="ChEBI" id="CHEBI:15740"/>
        <dbReference type="ChEBI" id="CHEBI:37565"/>
        <dbReference type="ChEBI" id="CHEBI:58462"/>
        <dbReference type="EC" id="3.5.4.16"/>
    </reaction>
</comment>
<comment type="pathway">
    <text>Cofactor biosynthesis; 7,8-dihydroneopterin triphosphate biosynthesis; 7,8-dihydroneopterin triphosphate from GTP: step 1/1.</text>
</comment>
<comment type="subunit">
    <text evidence="1">Toroid-shaped homodecamer, composed of two pentamers of five dimers.</text>
</comment>
<comment type="interaction">
    <interactant intactId="EBI-311852">
        <id>Q19980</id>
    </interactant>
    <interactant intactId="EBI-2916517">
        <id>W6RTA4</id>
        <label>cla-1</label>
    </interactant>
    <organismsDiffer>false</organismsDiffer>
    <experiments>2</experiments>
</comment>
<comment type="interaction">
    <interactant intactId="EBI-311852">
        <id>Q19980</id>
    </interactant>
    <interactant intactId="EBI-311847">
        <id>Q22306</id>
        <label>T07D4.2</label>
    </interactant>
    <organismsDiffer>false</organismsDiffer>
    <experiments>2</experiments>
</comment>
<comment type="similarity">
    <text evidence="3">Belongs to the GTP cyclohydrolase I family.</text>
</comment>
<sequence>MSRIENESGFLSSDAASVGSEDDKVEMKKRNGTIPKEDHLKSMCNAYQSIIQHVGEDINRQGLLKTPERAAKAMMAFTKGYDDQLDELLNEAVFDEDHDEMVIVKDIEMFSLCEHHLVPFMGKVHIGYIPNKKVLGLSKLARIVEMFSRRLQVQERLTKQIATAMVQAVQPSGVAVVIEASHMCMVMRGVQKINASTTTSCMLGVFRDDPKTREEFLNLINKR</sequence>